<protein>
    <recommendedName>
        <fullName evidence="1">Dephospho-CoA kinase</fullName>
        <ecNumber evidence="1">2.7.1.24</ecNumber>
    </recommendedName>
    <alternativeName>
        <fullName evidence="1">Dephosphocoenzyme A kinase</fullName>
    </alternativeName>
</protein>
<sequence length="197" mass="22054">MRIGLTGGIASGKSLVATYLEKQGIPVVDADKLARQVVEPGEPALAQIVATFGEHVLQDDGTLDRKQLGAIIFGDEQKRKQLNEIVHPAVRQSMKKQADLYEQRGYTRVVLDIPLLYESNLFHMVNQVWLVYVDEATQLRRLIERDGLTETEAKQRIAAQMPLTAKKAQADVLIDNNGTKENTYRQVYDALAKTAHE</sequence>
<organism>
    <name type="scientific">Shouchella clausii (strain KSM-K16)</name>
    <name type="common">Alkalihalobacillus clausii</name>
    <dbReference type="NCBI Taxonomy" id="66692"/>
    <lineage>
        <taxon>Bacteria</taxon>
        <taxon>Bacillati</taxon>
        <taxon>Bacillota</taxon>
        <taxon>Bacilli</taxon>
        <taxon>Bacillales</taxon>
        <taxon>Bacillaceae</taxon>
        <taxon>Shouchella</taxon>
    </lineage>
</organism>
<accession>Q5WEG9</accession>
<reference key="1">
    <citation type="submission" date="2003-10" db="EMBL/GenBank/DDBJ databases">
        <title>The complete genome sequence of the alkaliphilic Bacillus clausii KSM-K16.</title>
        <authorList>
            <person name="Takaki Y."/>
            <person name="Kageyama Y."/>
            <person name="Shimamura S."/>
            <person name="Suzuki H."/>
            <person name="Nishi S."/>
            <person name="Hatada Y."/>
            <person name="Kawai S."/>
            <person name="Ito S."/>
            <person name="Horikoshi K."/>
        </authorList>
    </citation>
    <scope>NUCLEOTIDE SEQUENCE [LARGE SCALE GENOMIC DNA]</scope>
    <source>
        <strain>KSM-K16</strain>
    </source>
</reference>
<name>COAE_SHOC1</name>
<proteinExistence type="inferred from homology"/>
<keyword id="KW-0067">ATP-binding</keyword>
<keyword id="KW-0173">Coenzyme A biosynthesis</keyword>
<keyword id="KW-0963">Cytoplasm</keyword>
<keyword id="KW-0418">Kinase</keyword>
<keyword id="KW-0547">Nucleotide-binding</keyword>
<keyword id="KW-1185">Reference proteome</keyword>
<keyword id="KW-0808">Transferase</keyword>
<comment type="function">
    <text evidence="1">Catalyzes the phosphorylation of the 3'-hydroxyl group of dephosphocoenzyme A to form coenzyme A.</text>
</comment>
<comment type="catalytic activity">
    <reaction evidence="1">
        <text>3'-dephospho-CoA + ATP = ADP + CoA + H(+)</text>
        <dbReference type="Rhea" id="RHEA:18245"/>
        <dbReference type="ChEBI" id="CHEBI:15378"/>
        <dbReference type="ChEBI" id="CHEBI:30616"/>
        <dbReference type="ChEBI" id="CHEBI:57287"/>
        <dbReference type="ChEBI" id="CHEBI:57328"/>
        <dbReference type="ChEBI" id="CHEBI:456216"/>
        <dbReference type="EC" id="2.7.1.24"/>
    </reaction>
</comment>
<comment type="pathway">
    <text evidence="1">Cofactor biosynthesis; coenzyme A biosynthesis; CoA from (R)-pantothenate: step 5/5.</text>
</comment>
<comment type="subcellular location">
    <subcellularLocation>
        <location evidence="1">Cytoplasm</location>
    </subcellularLocation>
</comment>
<comment type="similarity">
    <text evidence="1">Belongs to the CoaE family.</text>
</comment>
<dbReference type="EC" id="2.7.1.24" evidence="1"/>
<dbReference type="EMBL" id="AP006627">
    <property type="protein sequence ID" value="BAD65241.1"/>
    <property type="molecule type" value="Genomic_DNA"/>
</dbReference>
<dbReference type="RefSeq" id="WP_011247549.1">
    <property type="nucleotide sequence ID" value="NC_006582.1"/>
</dbReference>
<dbReference type="SMR" id="Q5WEG9"/>
<dbReference type="STRING" id="66692.ABC2706"/>
<dbReference type="KEGG" id="bcl:ABC2706"/>
<dbReference type="eggNOG" id="COG0237">
    <property type="taxonomic scope" value="Bacteria"/>
</dbReference>
<dbReference type="HOGENOM" id="CLU_057180_0_0_9"/>
<dbReference type="OrthoDB" id="9812943at2"/>
<dbReference type="UniPathway" id="UPA00241">
    <property type="reaction ID" value="UER00356"/>
</dbReference>
<dbReference type="Proteomes" id="UP000001168">
    <property type="component" value="Chromosome"/>
</dbReference>
<dbReference type="GO" id="GO:0005737">
    <property type="term" value="C:cytoplasm"/>
    <property type="evidence" value="ECO:0007669"/>
    <property type="project" value="UniProtKB-SubCell"/>
</dbReference>
<dbReference type="GO" id="GO:0005524">
    <property type="term" value="F:ATP binding"/>
    <property type="evidence" value="ECO:0007669"/>
    <property type="project" value="UniProtKB-UniRule"/>
</dbReference>
<dbReference type="GO" id="GO:0004140">
    <property type="term" value="F:dephospho-CoA kinase activity"/>
    <property type="evidence" value="ECO:0007669"/>
    <property type="project" value="UniProtKB-UniRule"/>
</dbReference>
<dbReference type="GO" id="GO:0015937">
    <property type="term" value="P:coenzyme A biosynthetic process"/>
    <property type="evidence" value="ECO:0007669"/>
    <property type="project" value="UniProtKB-UniRule"/>
</dbReference>
<dbReference type="CDD" id="cd02022">
    <property type="entry name" value="DPCK"/>
    <property type="match status" value="1"/>
</dbReference>
<dbReference type="FunFam" id="3.40.50.300:FF:000991">
    <property type="entry name" value="Dephospho-CoA kinase"/>
    <property type="match status" value="1"/>
</dbReference>
<dbReference type="Gene3D" id="3.40.50.300">
    <property type="entry name" value="P-loop containing nucleotide triphosphate hydrolases"/>
    <property type="match status" value="1"/>
</dbReference>
<dbReference type="HAMAP" id="MF_00376">
    <property type="entry name" value="Dephospho_CoA_kinase"/>
    <property type="match status" value="1"/>
</dbReference>
<dbReference type="InterPro" id="IPR001977">
    <property type="entry name" value="Depp_CoAkinase"/>
</dbReference>
<dbReference type="InterPro" id="IPR027417">
    <property type="entry name" value="P-loop_NTPase"/>
</dbReference>
<dbReference type="NCBIfam" id="TIGR00152">
    <property type="entry name" value="dephospho-CoA kinase"/>
    <property type="match status" value="1"/>
</dbReference>
<dbReference type="PANTHER" id="PTHR10695:SF46">
    <property type="entry name" value="BIFUNCTIONAL COENZYME A SYNTHASE-RELATED"/>
    <property type="match status" value="1"/>
</dbReference>
<dbReference type="PANTHER" id="PTHR10695">
    <property type="entry name" value="DEPHOSPHO-COA KINASE-RELATED"/>
    <property type="match status" value="1"/>
</dbReference>
<dbReference type="Pfam" id="PF01121">
    <property type="entry name" value="CoaE"/>
    <property type="match status" value="1"/>
</dbReference>
<dbReference type="SUPFAM" id="SSF52540">
    <property type="entry name" value="P-loop containing nucleoside triphosphate hydrolases"/>
    <property type="match status" value="1"/>
</dbReference>
<dbReference type="PROSITE" id="PS51219">
    <property type="entry name" value="DPCK"/>
    <property type="match status" value="1"/>
</dbReference>
<feature type="chain" id="PRO_0000243257" description="Dephospho-CoA kinase">
    <location>
        <begin position="1"/>
        <end position="197"/>
    </location>
</feature>
<feature type="domain" description="DPCK" evidence="1">
    <location>
        <begin position="2"/>
        <end position="197"/>
    </location>
</feature>
<feature type="binding site" evidence="1">
    <location>
        <begin position="10"/>
        <end position="15"/>
    </location>
    <ligand>
        <name>ATP</name>
        <dbReference type="ChEBI" id="CHEBI:30616"/>
    </ligand>
</feature>
<evidence type="ECO:0000255" key="1">
    <source>
        <dbReference type="HAMAP-Rule" id="MF_00376"/>
    </source>
</evidence>
<gene>
    <name evidence="1" type="primary">coaE</name>
    <name type="ordered locus">ABC2706</name>
</gene>